<comment type="function">
    <text evidence="1">Produces ATP from ADP in the presence of a proton gradient across the membrane. The alpha chain is a regulatory subunit.</text>
</comment>
<comment type="catalytic activity">
    <reaction evidence="1">
        <text>ATP + H2O + 4 H(+)(in) = ADP + phosphate + 5 H(+)(out)</text>
        <dbReference type="Rhea" id="RHEA:57720"/>
        <dbReference type="ChEBI" id="CHEBI:15377"/>
        <dbReference type="ChEBI" id="CHEBI:15378"/>
        <dbReference type="ChEBI" id="CHEBI:30616"/>
        <dbReference type="ChEBI" id="CHEBI:43474"/>
        <dbReference type="ChEBI" id="CHEBI:456216"/>
        <dbReference type="EC" id="7.1.2.2"/>
    </reaction>
</comment>
<comment type="subunit">
    <text evidence="1">F-type ATPases have 2 components, CF(1) - the catalytic core - and CF(0) - the membrane proton channel. CF(1) has five subunits: alpha(3), beta(3), gamma(1), delta(1), epsilon(1). CF(0) has four main subunits: a, b, b' and c.</text>
</comment>
<comment type="subcellular location">
    <subcellularLocation>
        <location evidence="1">Plastid</location>
        <location evidence="1">Chloroplast thylakoid membrane</location>
        <topology evidence="1">Peripheral membrane protein</topology>
    </subcellularLocation>
</comment>
<comment type="similarity">
    <text evidence="1">Belongs to the ATPase alpha/beta chains family.</text>
</comment>
<sequence>MATLRADEISNIIRERIEQYTREVKVVNTGTVLQVGDGIARIHGLDEVMAGELVEFEEGTIGIALNLESNNVGVVLMGDGLTIQEGSSVKATGRIAQIPVSEAYLGRVVNALAKPIDGRGEIAASEFRLIESPAPGIISRRSVYEPLQTGLIAIDSMIPVGRGQRELIIGDRQTGKTAVATDTILNQKGQNVICVYVAIGQKASSVAQVVTNFQERGAMEYTIVVAETADSPATLQYLAPYTGAALAEYFMYRERHTSIIYDDLSKQAQAYRQMSLLLRRPPGREAYPGDVFYLHSRLLERAAKSSSRLGEGSMTALPIVETQSGDVSAYIPTNVISITDGQIFLSADLFNAGIRPAINVGISVSRVGSAAQIKAMKQVAGKSKLELAQFAELEAFAQFASDLDKATQNQLARGKRLRELLKQSQSEPLAVDEQVVTIYTGTNGYLDTLEIGQVKEFLVKLRTYLKKNKPQFQEIISSTKTFTEEAEALLKEAIQEQLELFLLQEQT</sequence>
<proteinExistence type="inferred from homology"/>
<accession>Q3V549</accession>
<keyword id="KW-0066">ATP synthesis</keyword>
<keyword id="KW-0067">ATP-binding</keyword>
<keyword id="KW-0139">CF(1)</keyword>
<keyword id="KW-0150">Chloroplast</keyword>
<keyword id="KW-0375">Hydrogen ion transport</keyword>
<keyword id="KW-0406">Ion transport</keyword>
<keyword id="KW-0472">Membrane</keyword>
<keyword id="KW-0547">Nucleotide-binding</keyword>
<keyword id="KW-0934">Plastid</keyword>
<keyword id="KW-0793">Thylakoid</keyword>
<keyword id="KW-1278">Translocase</keyword>
<keyword id="KW-0813">Transport</keyword>
<gene>
    <name evidence="1" type="primary">atpA</name>
</gene>
<feature type="chain" id="PRO_0000238413" description="ATP synthase subunit alpha, chloroplastic">
    <location>
        <begin position="1"/>
        <end position="507"/>
    </location>
</feature>
<feature type="binding site" evidence="1">
    <location>
        <begin position="170"/>
        <end position="177"/>
    </location>
    <ligand>
        <name>ATP</name>
        <dbReference type="ChEBI" id="CHEBI:30616"/>
    </ligand>
</feature>
<feature type="site" description="Required for activity" evidence="1">
    <location>
        <position position="363"/>
    </location>
</feature>
<name>ATPA_ACOCL</name>
<protein>
    <recommendedName>
        <fullName evidence="1">ATP synthase subunit alpha, chloroplastic</fullName>
        <ecNumber evidence="1">7.1.2.2</ecNumber>
    </recommendedName>
    <alternativeName>
        <fullName evidence="1">ATP synthase F1 sector subunit alpha</fullName>
    </alternativeName>
    <alternativeName>
        <fullName evidence="1">F-ATPase subunit alpha</fullName>
    </alternativeName>
</protein>
<evidence type="ECO:0000255" key="1">
    <source>
        <dbReference type="HAMAP-Rule" id="MF_01346"/>
    </source>
</evidence>
<organism>
    <name type="scientific">Acorus calamus</name>
    <name type="common">Sweet flag</name>
    <dbReference type="NCBI Taxonomy" id="4465"/>
    <lineage>
        <taxon>Eukaryota</taxon>
        <taxon>Viridiplantae</taxon>
        <taxon>Streptophyta</taxon>
        <taxon>Embryophyta</taxon>
        <taxon>Tracheophyta</taxon>
        <taxon>Spermatophyta</taxon>
        <taxon>Magnoliopsida</taxon>
        <taxon>Liliopsida</taxon>
        <taxon>Acoraceae</taxon>
        <taxon>Acorus</taxon>
    </lineage>
</organism>
<dbReference type="EC" id="7.1.2.2" evidence="1"/>
<dbReference type="EMBL" id="AJ879453">
    <property type="protein sequence ID" value="CAI53779.1"/>
    <property type="molecule type" value="Genomic_DNA"/>
</dbReference>
<dbReference type="RefSeq" id="YP_319750.1">
    <property type="nucleotide sequence ID" value="NC_007407.1"/>
</dbReference>
<dbReference type="SMR" id="Q3V549"/>
<dbReference type="GeneID" id="3677504"/>
<dbReference type="GO" id="GO:0009535">
    <property type="term" value="C:chloroplast thylakoid membrane"/>
    <property type="evidence" value="ECO:0007669"/>
    <property type="project" value="UniProtKB-SubCell"/>
</dbReference>
<dbReference type="GO" id="GO:0045259">
    <property type="term" value="C:proton-transporting ATP synthase complex"/>
    <property type="evidence" value="ECO:0007669"/>
    <property type="project" value="UniProtKB-KW"/>
</dbReference>
<dbReference type="GO" id="GO:0043531">
    <property type="term" value="F:ADP binding"/>
    <property type="evidence" value="ECO:0007669"/>
    <property type="project" value="TreeGrafter"/>
</dbReference>
<dbReference type="GO" id="GO:0005524">
    <property type="term" value="F:ATP binding"/>
    <property type="evidence" value="ECO:0007669"/>
    <property type="project" value="UniProtKB-UniRule"/>
</dbReference>
<dbReference type="GO" id="GO:0046933">
    <property type="term" value="F:proton-transporting ATP synthase activity, rotational mechanism"/>
    <property type="evidence" value="ECO:0007669"/>
    <property type="project" value="UniProtKB-UniRule"/>
</dbReference>
<dbReference type="CDD" id="cd18113">
    <property type="entry name" value="ATP-synt_F1_alpha_C"/>
    <property type="match status" value="1"/>
</dbReference>
<dbReference type="CDD" id="cd18116">
    <property type="entry name" value="ATP-synt_F1_alpha_N"/>
    <property type="match status" value="1"/>
</dbReference>
<dbReference type="CDD" id="cd01132">
    <property type="entry name" value="F1-ATPase_alpha_CD"/>
    <property type="match status" value="1"/>
</dbReference>
<dbReference type="FunFam" id="1.20.150.20:FF:000001">
    <property type="entry name" value="ATP synthase subunit alpha"/>
    <property type="match status" value="1"/>
</dbReference>
<dbReference type="FunFam" id="2.40.30.20:FF:000001">
    <property type="entry name" value="ATP synthase subunit alpha"/>
    <property type="match status" value="1"/>
</dbReference>
<dbReference type="FunFam" id="3.40.50.300:FF:000002">
    <property type="entry name" value="ATP synthase subunit alpha"/>
    <property type="match status" value="1"/>
</dbReference>
<dbReference type="Gene3D" id="2.40.30.20">
    <property type="match status" value="1"/>
</dbReference>
<dbReference type="Gene3D" id="1.20.150.20">
    <property type="entry name" value="ATP synthase alpha/beta chain, C-terminal domain"/>
    <property type="match status" value="1"/>
</dbReference>
<dbReference type="Gene3D" id="3.40.50.300">
    <property type="entry name" value="P-loop containing nucleotide triphosphate hydrolases"/>
    <property type="match status" value="1"/>
</dbReference>
<dbReference type="HAMAP" id="MF_01346">
    <property type="entry name" value="ATP_synth_alpha_bact"/>
    <property type="match status" value="1"/>
</dbReference>
<dbReference type="InterPro" id="IPR023366">
    <property type="entry name" value="ATP_synth_asu-like_sf"/>
</dbReference>
<dbReference type="InterPro" id="IPR000793">
    <property type="entry name" value="ATP_synth_asu_C"/>
</dbReference>
<dbReference type="InterPro" id="IPR038376">
    <property type="entry name" value="ATP_synth_asu_C_sf"/>
</dbReference>
<dbReference type="InterPro" id="IPR033732">
    <property type="entry name" value="ATP_synth_F1_a_nt-bd_dom"/>
</dbReference>
<dbReference type="InterPro" id="IPR005294">
    <property type="entry name" value="ATP_synth_F1_asu"/>
</dbReference>
<dbReference type="InterPro" id="IPR020003">
    <property type="entry name" value="ATPase_a/bsu_AS"/>
</dbReference>
<dbReference type="InterPro" id="IPR004100">
    <property type="entry name" value="ATPase_F1/V1/A1_a/bsu_N"/>
</dbReference>
<dbReference type="InterPro" id="IPR036121">
    <property type="entry name" value="ATPase_F1/V1/A1_a/bsu_N_sf"/>
</dbReference>
<dbReference type="InterPro" id="IPR000194">
    <property type="entry name" value="ATPase_F1/V1/A1_a/bsu_nucl-bd"/>
</dbReference>
<dbReference type="InterPro" id="IPR027417">
    <property type="entry name" value="P-loop_NTPase"/>
</dbReference>
<dbReference type="NCBIfam" id="TIGR00962">
    <property type="entry name" value="atpA"/>
    <property type="match status" value="1"/>
</dbReference>
<dbReference type="NCBIfam" id="NF009884">
    <property type="entry name" value="PRK13343.1"/>
    <property type="match status" value="1"/>
</dbReference>
<dbReference type="PANTHER" id="PTHR48082">
    <property type="entry name" value="ATP SYNTHASE SUBUNIT ALPHA, MITOCHONDRIAL"/>
    <property type="match status" value="1"/>
</dbReference>
<dbReference type="PANTHER" id="PTHR48082:SF2">
    <property type="entry name" value="ATP SYNTHASE SUBUNIT ALPHA, MITOCHONDRIAL"/>
    <property type="match status" value="1"/>
</dbReference>
<dbReference type="Pfam" id="PF00006">
    <property type="entry name" value="ATP-synt_ab"/>
    <property type="match status" value="1"/>
</dbReference>
<dbReference type="Pfam" id="PF00306">
    <property type="entry name" value="ATP-synt_ab_C"/>
    <property type="match status" value="1"/>
</dbReference>
<dbReference type="Pfam" id="PF02874">
    <property type="entry name" value="ATP-synt_ab_N"/>
    <property type="match status" value="1"/>
</dbReference>
<dbReference type="PIRSF" id="PIRSF039088">
    <property type="entry name" value="F_ATPase_subunit_alpha"/>
    <property type="match status" value="1"/>
</dbReference>
<dbReference type="SUPFAM" id="SSF47917">
    <property type="entry name" value="C-terminal domain of alpha and beta subunits of F1 ATP synthase"/>
    <property type="match status" value="1"/>
</dbReference>
<dbReference type="SUPFAM" id="SSF50615">
    <property type="entry name" value="N-terminal domain of alpha and beta subunits of F1 ATP synthase"/>
    <property type="match status" value="1"/>
</dbReference>
<dbReference type="SUPFAM" id="SSF52540">
    <property type="entry name" value="P-loop containing nucleoside triphosphate hydrolases"/>
    <property type="match status" value="1"/>
</dbReference>
<dbReference type="PROSITE" id="PS00152">
    <property type="entry name" value="ATPASE_ALPHA_BETA"/>
    <property type="match status" value="1"/>
</dbReference>
<geneLocation type="chloroplast"/>
<reference key="1">
    <citation type="journal article" date="2005" name="Mol. Biol. Evol.">
        <title>Analysis of Acorus calamus chloroplast genome and its phylogenetic implications.</title>
        <authorList>
            <person name="Goremykin V.V."/>
            <person name="Holland B."/>
            <person name="Hirsch-Ernst K.I."/>
            <person name="Hellwig F.H."/>
        </authorList>
    </citation>
    <scope>NUCLEOTIDE SEQUENCE [LARGE SCALE GENOMIC DNA]</scope>
</reference>